<keyword id="KW-0472">Membrane</keyword>
<keyword id="KW-1185">Reference proteome</keyword>
<keyword id="KW-0812">Transmembrane</keyword>
<keyword id="KW-1133">Transmembrane helix</keyword>
<reference key="1">
    <citation type="journal article" date="2005" name="Nature">
        <title>The genome of the social amoeba Dictyostelium discoideum.</title>
        <authorList>
            <person name="Eichinger L."/>
            <person name="Pachebat J.A."/>
            <person name="Gloeckner G."/>
            <person name="Rajandream M.A."/>
            <person name="Sucgang R."/>
            <person name="Berriman M."/>
            <person name="Song J."/>
            <person name="Olsen R."/>
            <person name="Szafranski K."/>
            <person name="Xu Q."/>
            <person name="Tunggal B."/>
            <person name="Kummerfeld S."/>
            <person name="Madera M."/>
            <person name="Konfortov B.A."/>
            <person name="Rivero F."/>
            <person name="Bankier A.T."/>
            <person name="Lehmann R."/>
            <person name="Hamlin N."/>
            <person name="Davies R."/>
            <person name="Gaudet P."/>
            <person name="Fey P."/>
            <person name="Pilcher K."/>
            <person name="Chen G."/>
            <person name="Saunders D."/>
            <person name="Sodergren E.J."/>
            <person name="Davis P."/>
            <person name="Kerhornou A."/>
            <person name="Nie X."/>
            <person name="Hall N."/>
            <person name="Anjard C."/>
            <person name="Hemphill L."/>
            <person name="Bason N."/>
            <person name="Farbrother P."/>
            <person name="Desany B."/>
            <person name="Just E."/>
            <person name="Morio T."/>
            <person name="Rost R."/>
            <person name="Churcher C.M."/>
            <person name="Cooper J."/>
            <person name="Haydock S."/>
            <person name="van Driessche N."/>
            <person name="Cronin A."/>
            <person name="Goodhead I."/>
            <person name="Muzny D.M."/>
            <person name="Mourier T."/>
            <person name="Pain A."/>
            <person name="Lu M."/>
            <person name="Harper D."/>
            <person name="Lindsay R."/>
            <person name="Hauser H."/>
            <person name="James K.D."/>
            <person name="Quiles M."/>
            <person name="Madan Babu M."/>
            <person name="Saito T."/>
            <person name="Buchrieser C."/>
            <person name="Wardroper A."/>
            <person name="Felder M."/>
            <person name="Thangavelu M."/>
            <person name="Johnson D."/>
            <person name="Knights A."/>
            <person name="Loulseged H."/>
            <person name="Mungall K.L."/>
            <person name="Oliver K."/>
            <person name="Price C."/>
            <person name="Quail M.A."/>
            <person name="Urushihara H."/>
            <person name="Hernandez J."/>
            <person name="Rabbinowitsch E."/>
            <person name="Steffen D."/>
            <person name="Sanders M."/>
            <person name="Ma J."/>
            <person name="Kohara Y."/>
            <person name="Sharp S."/>
            <person name="Simmonds M.N."/>
            <person name="Spiegler S."/>
            <person name="Tivey A."/>
            <person name="Sugano S."/>
            <person name="White B."/>
            <person name="Walker D."/>
            <person name="Woodward J.R."/>
            <person name="Winckler T."/>
            <person name="Tanaka Y."/>
            <person name="Shaulsky G."/>
            <person name="Schleicher M."/>
            <person name="Weinstock G.M."/>
            <person name="Rosenthal A."/>
            <person name="Cox E.C."/>
            <person name="Chisholm R.L."/>
            <person name="Gibbs R.A."/>
            <person name="Loomis W.F."/>
            <person name="Platzer M."/>
            <person name="Kay R.R."/>
            <person name="Williams J.G."/>
            <person name="Dear P.H."/>
            <person name="Noegel A.A."/>
            <person name="Barrell B.G."/>
            <person name="Kuspa A."/>
        </authorList>
    </citation>
    <scope>NUCLEOTIDE SEQUENCE [LARGE SCALE GENOMIC DNA]</scope>
    <source>
        <strain>AX4</strain>
    </source>
</reference>
<gene>
    <name type="ORF">DDB_G0284909</name>
</gene>
<sequence length="337" mass="38858">MKLKINIRPNEIIFLICIVVIFSFSYTLTYFDSPIFKEHYITNNGNDFGVENHFVTYHSTYKEDIHKRIIDPHHGLIQEITKTFYPVSSPLEKLFSFSDNILIVLIIVQVIVGFLIFLLSVEKLSKCNYQLKSIFSTKSTFYINNNNNNNNEDINNNNNNNNNNNNKNKNDERNNEEIEDEETIRKEKILIIKKKRDILLAIIIFFLVLLGVLTIIYVSFIPLNIRKAFIGQQFYYKGSIDPLCADISNEGDHHIGKCKSLNGRIGNVNDKIFGYSWSLDSGLFNVKIVFFSTILIEFLTGCLILLMKFKKDPNIVPLTKPSIASPTQIPHLFCIAK</sequence>
<organism>
    <name type="scientific">Dictyostelium discoideum</name>
    <name type="common">Social amoeba</name>
    <dbReference type="NCBI Taxonomy" id="44689"/>
    <lineage>
        <taxon>Eukaryota</taxon>
        <taxon>Amoebozoa</taxon>
        <taxon>Evosea</taxon>
        <taxon>Eumycetozoa</taxon>
        <taxon>Dictyostelia</taxon>
        <taxon>Dictyosteliales</taxon>
        <taxon>Dictyosteliaceae</taxon>
        <taxon>Dictyostelium</taxon>
    </lineage>
</organism>
<evidence type="ECO:0000255" key="1"/>
<evidence type="ECO:0000256" key="2">
    <source>
        <dbReference type="SAM" id="MobiDB-lite"/>
    </source>
</evidence>
<evidence type="ECO:0000305" key="3"/>
<protein>
    <recommendedName>
        <fullName>Uncharacterized transmembrane protein DDB_G0284909</fullName>
    </recommendedName>
</protein>
<name>Y6251_DICDI</name>
<comment type="subcellular location">
    <subcellularLocation>
        <location evidence="3">Membrane</location>
        <topology evidence="3">Multi-pass membrane protein</topology>
    </subcellularLocation>
</comment>
<accession>Q54NZ2</accession>
<feature type="chain" id="PRO_0000350789" description="Uncharacterized transmembrane protein DDB_G0284909">
    <location>
        <begin position="1"/>
        <end position="337"/>
    </location>
</feature>
<feature type="topological domain" description="Cytoplasmic" evidence="1">
    <location>
        <begin position="1"/>
        <end position="10"/>
    </location>
</feature>
<feature type="transmembrane region" description="Helical" evidence="1">
    <location>
        <begin position="11"/>
        <end position="31"/>
    </location>
</feature>
<feature type="topological domain" description="Extracellular" evidence="1">
    <location>
        <begin position="32"/>
        <end position="100"/>
    </location>
</feature>
<feature type="transmembrane region" description="Helical" evidence="1">
    <location>
        <begin position="101"/>
        <end position="121"/>
    </location>
</feature>
<feature type="topological domain" description="Cytoplasmic" evidence="1">
    <location>
        <begin position="122"/>
        <end position="197"/>
    </location>
</feature>
<feature type="transmembrane region" description="Helical" evidence="1">
    <location>
        <begin position="198"/>
        <end position="218"/>
    </location>
</feature>
<feature type="topological domain" description="Extracellular" evidence="1">
    <location>
        <begin position="219"/>
        <end position="285"/>
    </location>
</feature>
<feature type="transmembrane region" description="Helical" evidence="1">
    <location>
        <begin position="286"/>
        <end position="306"/>
    </location>
</feature>
<feature type="topological domain" description="Cytoplasmic" evidence="1">
    <location>
        <begin position="307"/>
        <end position="337"/>
    </location>
</feature>
<feature type="region of interest" description="Disordered" evidence="2">
    <location>
        <begin position="148"/>
        <end position="179"/>
    </location>
</feature>
<feature type="compositionally biased region" description="Low complexity" evidence="2">
    <location>
        <begin position="148"/>
        <end position="167"/>
    </location>
</feature>
<proteinExistence type="predicted"/>
<dbReference type="EMBL" id="AAFI02000073">
    <property type="protein sequence ID" value="EAL64918.1"/>
    <property type="molecule type" value="Genomic_DNA"/>
</dbReference>
<dbReference type="RefSeq" id="XP_639925.1">
    <property type="nucleotide sequence ID" value="XM_634833.1"/>
</dbReference>
<dbReference type="SMR" id="Q54NZ2"/>
<dbReference type="FunCoup" id="Q54NZ2">
    <property type="interactions" value="877"/>
</dbReference>
<dbReference type="PaxDb" id="44689-DDB0186251"/>
<dbReference type="EnsemblProtists" id="EAL64918">
    <property type="protein sequence ID" value="EAL64918"/>
    <property type="gene ID" value="DDB_G0284909"/>
</dbReference>
<dbReference type="GeneID" id="8624837"/>
<dbReference type="KEGG" id="ddi:DDB_G0284909"/>
<dbReference type="dictyBase" id="DDB_G0284909"/>
<dbReference type="VEuPathDB" id="AmoebaDB:DDB_G0284909"/>
<dbReference type="eggNOG" id="ENOG502RIIS">
    <property type="taxonomic scope" value="Eukaryota"/>
</dbReference>
<dbReference type="HOGENOM" id="CLU_824939_0_0_1"/>
<dbReference type="InParanoid" id="Q54NZ2"/>
<dbReference type="OMA" id="TVETYEY"/>
<dbReference type="PRO" id="PR:Q54NZ2"/>
<dbReference type="Proteomes" id="UP000002195">
    <property type="component" value="Chromosome 4"/>
</dbReference>
<dbReference type="GO" id="GO:0016020">
    <property type="term" value="C:membrane"/>
    <property type="evidence" value="ECO:0007669"/>
    <property type="project" value="UniProtKB-SubCell"/>
</dbReference>
<dbReference type="PANTHER" id="PTHR36911">
    <property type="entry name" value="LIM ZINC-BINDING DOMAIN-CONTAINING PROTEIN-RELATED"/>
    <property type="match status" value="1"/>
</dbReference>